<comment type="function">
    <text evidence="1 3">Fusion protein of the methyltransferase aboM and a type III borosin core peptide; part of the gene cluster that mediates the biosynthesis of a type III borosin, a highly methylated cyclic peptide with potent biological activities (PubMed:31117659). Type III borosins derive from the C-terminus of the fusion protein, and it is the same protein that methylates its own C-terminus using S-adenosyl methionine (SAM) (PubMed:31117659). The C-terminus is subsequently cleaved off and macrocyclized by a prolyloligopeptidase to give the final product (By similarity).</text>
</comment>
<comment type="pathway">
    <text evidence="6">Secondary metabolite biosynthesis.</text>
</comment>
<comment type="domain">
    <text evidence="4">The type III borosins are defined by the overall architecture of AboMA and are distinguished by their additional 400-amino-acid C-terminal domain followed by long and highly repetitive core sequences.</text>
</comment>
<comment type="domain">
    <text evidence="6">Within the homodimer, the clasp domain wraps around the adjacent subunit to position the core peptide into the other subunit's active site for iterative intermolecular methylation.</text>
</comment>
<comment type="PTM">
    <text evidence="3 5">AboMA automethylates at Val-805, Val-807, Thr-808, Val-810, Val-812, Thr-813, Val-815, Val-817, Thr-818, Val-820, Val-822, Thr-823, Val-825, Val-827 and Thr-828, Val-830, Val-832 and T-833 before being processed by a prolyloligopeptidase which likely forms a peptidyl ester upon removal of the follower propeptide, which then undergoes macrocyclization with the N-terminus of the modified core peptide (PubMed:31117659). Peptide backbone alpha-N-methylations change the physicochemical properties of amide bonds to provide structural constraints and other favorable characteristics including biological membrane permeability to peptides (Probable).</text>
</comment>
<comment type="similarity">
    <text evidence="5">In the N-terminal section; belongs to the precorrin methyltransferase family.</text>
</comment>
<proteinExistence type="evidence at protein level"/>
<dbReference type="EC" id="2.1.1.-" evidence="3"/>
<dbReference type="SMR" id="P9WEN4"/>
<dbReference type="GO" id="GO:0008168">
    <property type="term" value="F:methyltransferase activity"/>
    <property type="evidence" value="ECO:0007669"/>
    <property type="project" value="UniProtKB-KW"/>
</dbReference>
<dbReference type="GO" id="GO:0032259">
    <property type="term" value="P:methylation"/>
    <property type="evidence" value="ECO:0007669"/>
    <property type="project" value="UniProtKB-KW"/>
</dbReference>
<dbReference type="CDD" id="cd19916">
    <property type="entry name" value="OphMA_like"/>
    <property type="match status" value="1"/>
</dbReference>
<dbReference type="Gene3D" id="3.40.1010.10">
    <property type="entry name" value="Cobalt-precorrin-4 Transmethylase, Domain 1"/>
    <property type="match status" value="1"/>
</dbReference>
<dbReference type="InterPro" id="IPR000878">
    <property type="entry name" value="4pyrrol_Mease"/>
</dbReference>
<dbReference type="InterPro" id="IPR035996">
    <property type="entry name" value="4pyrrol_Methylase_sf"/>
</dbReference>
<dbReference type="InterPro" id="IPR014777">
    <property type="entry name" value="4pyrrole_Mease_sub1"/>
</dbReference>
<dbReference type="Pfam" id="PF00590">
    <property type="entry name" value="TP_methylase"/>
    <property type="match status" value="1"/>
</dbReference>
<dbReference type="SUPFAM" id="SSF53790">
    <property type="entry name" value="Tetrapyrrole methylase"/>
    <property type="match status" value="1"/>
</dbReference>
<evidence type="ECO:0000250" key="1">
    <source>
        <dbReference type="UniProtKB" id="A0A2R2JFI5"/>
    </source>
</evidence>
<evidence type="ECO:0000256" key="2">
    <source>
        <dbReference type="SAM" id="MobiDB-lite"/>
    </source>
</evidence>
<evidence type="ECO:0000269" key="3">
    <source>
    </source>
</evidence>
<evidence type="ECO:0000303" key="4">
    <source>
    </source>
</evidence>
<evidence type="ECO:0000305" key="5"/>
<evidence type="ECO:0000305" key="6">
    <source>
    </source>
</evidence>
<organism>
    <name type="scientific">Anomoporia bombycina</name>
    <name type="common">Polyporus bombycinus</name>
    <dbReference type="NCBI Taxonomy" id="264122"/>
    <lineage>
        <taxon>Eukaryota</taxon>
        <taxon>Fungi</taxon>
        <taxon>Dikarya</taxon>
        <taxon>Basidiomycota</taxon>
        <taxon>Agaricomycotina</taxon>
        <taxon>Agaricomycetes</taxon>
        <taxon>Agaricomycetidae</taxon>
        <taxon>Amylocorticiales</taxon>
        <taxon>Amylocorticiaceae</taxon>
        <taxon>Anomoporia</taxon>
    </lineage>
</organism>
<feature type="chain" id="PRO_0000458533" description="N-methyltranferase aboM" evidence="6">
    <location>
        <begin position="1"/>
        <end position="799"/>
    </location>
</feature>
<feature type="peptide" id="PRO_0000458534" description="Ribosomally synthesized type III borosin core peptide" evidence="6">
    <location>
        <begin position="800"/>
        <end position="861"/>
    </location>
</feature>
<feature type="repeat" description="1">
    <location>
        <begin position="805"/>
        <end position="809"/>
    </location>
</feature>
<feature type="repeat" description="2">
    <location>
        <begin position="810"/>
        <end position="814"/>
    </location>
</feature>
<feature type="repeat" description="3">
    <location>
        <begin position="815"/>
        <end position="819"/>
    </location>
</feature>
<feature type="repeat" description="4">
    <location>
        <begin position="820"/>
        <end position="824"/>
    </location>
</feature>
<feature type="repeat" description="5">
    <location>
        <begin position="825"/>
        <end position="829"/>
    </location>
</feature>
<feature type="repeat" description="6">
    <location>
        <begin position="830"/>
        <end position="834"/>
    </location>
</feature>
<feature type="repeat" description="7">
    <location>
        <begin position="835"/>
        <end position="839"/>
    </location>
</feature>
<feature type="repeat" description="8">
    <location>
        <begin position="840"/>
        <end position="844"/>
    </location>
</feature>
<feature type="repeat" description="9">
    <location>
        <begin position="845"/>
        <end position="849"/>
    </location>
</feature>
<feature type="repeat" description="10; approximate">
    <location>
        <begin position="850"/>
        <end position="854"/>
    </location>
</feature>
<feature type="region of interest" description="Methyltransferase domain" evidence="6">
    <location>
        <begin position="1"/>
        <end position="279"/>
    </location>
</feature>
<feature type="region of interest" description="Clasp domain" evidence="6">
    <location>
        <begin position="280"/>
        <end position="408"/>
    </location>
</feature>
<feature type="region of interest" description="Type III-specific C-terminal domain" evidence="6">
    <location>
        <begin position="409"/>
        <end position="799"/>
    </location>
</feature>
<feature type="region of interest" description="Disordered" evidence="2">
    <location>
        <begin position="575"/>
        <end position="596"/>
    </location>
</feature>
<feature type="region of interest" description="Disordered" evidence="2">
    <location>
        <begin position="772"/>
        <end position="801"/>
    </location>
</feature>
<feature type="region of interest" description="10 X 5 AA tandem repeats of VDVTD">
    <location>
        <begin position="805"/>
        <end position="854"/>
    </location>
</feature>
<feature type="compositionally biased region" description="Gly residues" evidence="2">
    <location>
        <begin position="579"/>
        <end position="593"/>
    </location>
</feature>
<feature type="compositionally biased region" description="Basic and acidic residues" evidence="2">
    <location>
        <begin position="772"/>
        <end position="783"/>
    </location>
</feature>
<feature type="compositionally biased region" description="Acidic residues" evidence="2">
    <location>
        <begin position="784"/>
        <end position="797"/>
    </location>
</feature>
<feature type="active site" evidence="1">
    <location>
        <position position="100"/>
    </location>
</feature>
<feature type="active site" evidence="1">
    <location>
        <position position="104"/>
    </location>
</feature>
<feature type="active site" evidence="1">
    <location>
        <position position="126"/>
    </location>
</feature>
<feature type="binding site" evidence="1">
    <location>
        <position position="126"/>
    </location>
    <ligand>
        <name>S-adenosyl-L-methionine</name>
        <dbReference type="ChEBI" id="CHEBI:59789"/>
    </ligand>
</feature>
<feature type="binding site" evidence="1">
    <location>
        <position position="128"/>
    </location>
    <ligand>
        <name>S-adenosyl-L-methionine</name>
        <dbReference type="ChEBI" id="CHEBI:59789"/>
    </ligand>
</feature>
<feature type="binding site" evidence="1">
    <location>
        <position position="131"/>
    </location>
    <ligand>
        <name>S-adenosyl-L-methionine</name>
        <dbReference type="ChEBI" id="CHEBI:59789"/>
    </ligand>
</feature>
<feature type="binding site" evidence="1">
    <location>
        <position position="158"/>
    </location>
    <ligand>
        <name>S-adenosyl-L-methionine</name>
        <dbReference type="ChEBI" id="CHEBI:59789"/>
    </ligand>
</feature>
<feature type="binding site" evidence="1">
    <location>
        <position position="200"/>
    </location>
    <ligand>
        <name>S-adenosyl-L-methionine</name>
        <dbReference type="ChEBI" id="CHEBI:59789"/>
    </ligand>
</feature>
<feature type="binding site" evidence="1">
    <location>
        <position position="241"/>
    </location>
    <ligand>
        <name>S-adenosyl-L-methionine</name>
        <dbReference type="ChEBI" id="CHEBI:59789"/>
    </ligand>
</feature>
<feature type="binding site" evidence="1">
    <location>
        <position position="272"/>
    </location>
    <ligand>
        <name>S-adenosyl-L-methionine</name>
        <dbReference type="ChEBI" id="CHEBI:59789"/>
    </ligand>
</feature>
<feature type="binding site" evidence="1">
    <location>
        <position position="273"/>
    </location>
    <ligand>
        <name>S-adenosyl-L-methionine</name>
        <dbReference type="ChEBI" id="CHEBI:59789"/>
    </ligand>
</feature>
<feature type="modified residue" description="N-methylvaline" evidence="3">
    <location>
        <position position="805"/>
    </location>
</feature>
<feature type="modified residue" description="N-methylvaline" evidence="3">
    <location>
        <position position="807"/>
    </location>
</feature>
<feature type="modified residue" description="N-methylthreonine" evidence="3">
    <location>
        <position position="808"/>
    </location>
</feature>
<feature type="modified residue" description="N-methylvaline" evidence="3">
    <location>
        <position position="810"/>
    </location>
</feature>
<feature type="modified residue" description="N-methylvaline" evidence="3">
    <location>
        <position position="812"/>
    </location>
</feature>
<feature type="modified residue" description="N-methylthreonine" evidence="3">
    <location>
        <position position="813"/>
    </location>
</feature>
<feature type="modified residue" description="N-methylvaline" evidence="3">
    <location>
        <position position="815"/>
    </location>
</feature>
<feature type="modified residue" description="N-methylvaline" evidence="3">
    <location>
        <position position="817"/>
    </location>
</feature>
<feature type="modified residue" description="N-methylthreonine" evidence="3">
    <location>
        <position position="818"/>
    </location>
</feature>
<feature type="modified residue" description="N-methylvaline" evidence="3">
    <location>
        <position position="820"/>
    </location>
</feature>
<feature type="modified residue" description="N-methylvaline" evidence="3">
    <location>
        <position position="822"/>
    </location>
</feature>
<feature type="modified residue" description="N-methylthreonine" evidence="3">
    <location>
        <position position="823"/>
    </location>
</feature>
<feature type="modified residue" description="N-methylvaline" evidence="3">
    <location>
        <position position="825"/>
    </location>
</feature>
<feature type="modified residue" description="N-methylvaline" evidence="3">
    <location>
        <position position="827"/>
    </location>
</feature>
<feature type="modified residue" description="N-methylthreonine" evidence="3">
    <location>
        <position position="828"/>
    </location>
</feature>
<feature type="modified residue" description="N-methylvaline" evidence="3">
    <location>
        <position position="830"/>
    </location>
</feature>
<feature type="modified residue" description="N-methylvaline" evidence="3">
    <location>
        <position position="832"/>
    </location>
</feature>
<feature type="modified residue" description="N-methylthreonine" evidence="3">
    <location>
        <position position="833"/>
    </location>
</feature>
<reference key="1">
    <citation type="journal article" date="2019" name="J. Am. Chem. Soc.">
        <title>Distinct autocatalytic alpha-N-methylating precursors expand the borosin RiPP family of peptide natural products.</title>
        <authorList>
            <person name="Quijano M.R."/>
            <person name="Zach C."/>
            <person name="Miller F.S."/>
            <person name="Lee A.R."/>
            <person name="Imani A.S."/>
            <person name="Kuenzler M."/>
            <person name="Freeman M.F."/>
        </authorList>
    </citation>
    <scope>FUNCTION</scope>
    <scope>DOMAIN</scope>
    <scope>CATALYTIC ACTIVITY</scope>
    <scope>METHYLATION AT VAL-805; VAL-807; THR-808; VAL-810; VAL-812; THR-813; VAL-815; VAL-817; THR-818; VAL-820; VAL-822; THR-823; VAL-825; VAL-827; THR-828; VAL-830; VAL-832 AND THR-833</scope>
</reference>
<keyword id="KW-0488">Methylation</keyword>
<keyword id="KW-0489">Methyltransferase</keyword>
<keyword id="KW-0677">Repeat</keyword>
<keyword id="KW-0949">S-adenosyl-L-methionine</keyword>
<keyword id="KW-0808">Transferase</keyword>
<protein>
    <recommendedName>
        <fullName evidence="4">Methyltransferase/ribosomally synthesized type III borosin cyclic peptide precursor aboMAa</fullName>
    </recommendedName>
    <alternativeName>
        <fullName evidence="4">Type III borosin cyclic peptide biosynthesis cluster protein MA</fullName>
    </alternativeName>
    <component>
        <recommendedName>
            <fullName evidence="4">N-methyltranferase aboM</fullName>
            <ecNumber evidence="3">2.1.1.-</ecNumber>
        </recommendedName>
    </component>
    <component>
        <recommendedName>
            <fullName evidence="4">Ribosomally synthesized type III borosin core peptide</fullName>
        </recommendedName>
    </component>
</protein>
<name>ABOMA_ANOBO</name>
<accession>P9WEN4</accession>
<sequence length="861" mass="91793">MSSPAVETKVPASPDVTAEVIPAPPSSHRPLPFGLRPGKLVIVGSGIGSIGQFTLSAVAHIEQADRVFFVVADPATEAFIYSKNKNSVDLYKFYDDKKPRMDTYIQMAEVMLRELRKGYSVVGVIYGHPGVFVTPSHRAISIARDEGYSAKMLPGVSAEDNLFADIGIDPSRPGCLTYEATDLLLRNRTLVPSSHLVLFQVGCIGLSDFRFKGFDNINFDVLLDRLEQVYGPDHAVIHYMAAVLPQSTTTIDRYTIKELRDPVIKKRITAISTFYLPPKALSPLHEESAAKLGLMKAGYKILDGAQAPYPPFPWAGPNVPIGIAYGRRELAAVAKLDSHVPPANYKPLRASNAMKSTMIKLATDPKAFAQYSRNPALLANSTPGLTTPERKALQTGSQGLVRSVMKTSPEDVAKQFVQAELRDPTLAKQYSQECYDQTGNTDGIAVISAWLKSKGYDTTPTAINDAWADMQANSLDVYQSTYNTMVDGKSGPAITIKSGVVYIGNTVVKKFAFSKSVLTWSSTDGNPSSATLSFVVLTDDDGQPLPANSYIGPQFTGFYWTSGAKPAAANTLGRNGAFPSGGGGGSGGGGGSSSQGADISTWVDSYQTYVVTTAGSWKDEDILKIDDDTAHTITYGPLKIVKYSLSNDTVSWSATDGNPFNAVIFFKVNKPTKANPTAGNQFVGKKWLPSDPAPAAVNWTGLIGSTADPKGTAAANATASMWKSIGINLGVAVSAMVLGTAVIKAIGAAWDKGSAAWKAAKAAADKAKKDAEAAEKDSAVDDEKFADEEPPDLEELPIPDADPLVDVTDVDVTDVDVTDVDVTDVDVTDVDVTDVDVTDVDVTDVDVTDVDVVDVLDVVVI</sequence>